<accession>O60087</accession>
<accession>Q96WS5</accession>
<protein>
    <recommendedName>
        <fullName>Probable glucoamylase</fullName>
        <ecNumber>3.2.1.3</ecNumber>
    </recommendedName>
    <alternativeName>
        <fullName>1,4-alpha-D-glucan glucohydrolase</fullName>
    </alternativeName>
    <alternativeName>
        <fullName>Glucan 1,4-alpha-glucosidase</fullName>
    </alternativeName>
    <alternativeName>
        <fullName>Meiotic expression up-regulated protein 17</fullName>
    </alternativeName>
</protein>
<reference key="1">
    <citation type="journal article" date="2002" name="Nature">
        <title>The genome sequence of Schizosaccharomyces pombe.</title>
        <authorList>
            <person name="Wood V."/>
            <person name="Gwilliam R."/>
            <person name="Rajandream M.A."/>
            <person name="Lyne M.H."/>
            <person name="Lyne R."/>
            <person name="Stewart A."/>
            <person name="Sgouros J.G."/>
            <person name="Peat N."/>
            <person name="Hayles J."/>
            <person name="Baker S.G."/>
            <person name="Basham D."/>
            <person name="Bowman S."/>
            <person name="Brooks K."/>
            <person name="Brown D."/>
            <person name="Brown S."/>
            <person name="Chillingworth T."/>
            <person name="Churcher C.M."/>
            <person name="Collins M."/>
            <person name="Connor R."/>
            <person name="Cronin A."/>
            <person name="Davis P."/>
            <person name="Feltwell T."/>
            <person name="Fraser A."/>
            <person name="Gentles S."/>
            <person name="Goble A."/>
            <person name="Hamlin N."/>
            <person name="Harris D.E."/>
            <person name="Hidalgo J."/>
            <person name="Hodgson G."/>
            <person name="Holroyd S."/>
            <person name="Hornsby T."/>
            <person name="Howarth S."/>
            <person name="Huckle E.J."/>
            <person name="Hunt S."/>
            <person name="Jagels K."/>
            <person name="James K.D."/>
            <person name="Jones L."/>
            <person name="Jones M."/>
            <person name="Leather S."/>
            <person name="McDonald S."/>
            <person name="McLean J."/>
            <person name="Mooney P."/>
            <person name="Moule S."/>
            <person name="Mungall K.L."/>
            <person name="Murphy L.D."/>
            <person name="Niblett D."/>
            <person name="Odell C."/>
            <person name="Oliver K."/>
            <person name="O'Neil S."/>
            <person name="Pearson D."/>
            <person name="Quail M.A."/>
            <person name="Rabbinowitsch E."/>
            <person name="Rutherford K.M."/>
            <person name="Rutter S."/>
            <person name="Saunders D."/>
            <person name="Seeger K."/>
            <person name="Sharp S."/>
            <person name="Skelton J."/>
            <person name="Simmonds M.N."/>
            <person name="Squares R."/>
            <person name="Squares S."/>
            <person name="Stevens K."/>
            <person name="Taylor K."/>
            <person name="Taylor R.G."/>
            <person name="Tivey A."/>
            <person name="Walsh S.V."/>
            <person name="Warren T."/>
            <person name="Whitehead S."/>
            <person name="Woodward J.R."/>
            <person name="Volckaert G."/>
            <person name="Aert R."/>
            <person name="Robben J."/>
            <person name="Grymonprez B."/>
            <person name="Weltjens I."/>
            <person name="Vanstreels E."/>
            <person name="Rieger M."/>
            <person name="Schaefer M."/>
            <person name="Mueller-Auer S."/>
            <person name="Gabel C."/>
            <person name="Fuchs M."/>
            <person name="Duesterhoeft A."/>
            <person name="Fritzc C."/>
            <person name="Holzer E."/>
            <person name="Moestl D."/>
            <person name="Hilbert H."/>
            <person name="Borzym K."/>
            <person name="Langer I."/>
            <person name="Beck A."/>
            <person name="Lehrach H."/>
            <person name="Reinhardt R."/>
            <person name="Pohl T.M."/>
            <person name="Eger P."/>
            <person name="Zimmermann W."/>
            <person name="Wedler H."/>
            <person name="Wambutt R."/>
            <person name="Purnelle B."/>
            <person name="Goffeau A."/>
            <person name="Cadieu E."/>
            <person name="Dreano S."/>
            <person name="Gloux S."/>
            <person name="Lelaure V."/>
            <person name="Mottier S."/>
            <person name="Galibert F."/>
            <person name="Aves S.J."/>
            <person name="Xiang Z."/>
            <person name="Hunt C."/>
            <person name="Moore K."/>
            <person name="Hurst S.M."/>
            <person name="Lucas M."/>
            <person name="Rochet M."/>
            <person name="Gaillardin C."/>
            <person name="Tallada V.A."/>
            <person name="Garzon A."/>
            <person name="Thode G."/>
            <person name="Daga R.R."/>
            <person name="Cruzado L."/>
            <person name="Jimenez J."/>
            <person name="Sanchez M."/>
            <person name="del Rey F."/>
            <person name="Benito J."/>
            <person name="Dominguez A."/>
            <person name="Revuelta J.L."/>
            <person name="Moreno S."/>
            <person name="Armstrong J."/>
            <person name="Forsburg S.L."/>
            <person name="Cerutti L."/>
            <person name="Lowe T."/>
            <person name="McCombie W.R."/>
            <person name="Paulsen I."/>
            <person name="Potashkin J."/>
            <person name="Shpakovski G.V."/>
            <person name="Ussery D."/>
            <person name="Barrell B.G."/>
            <person name="Nurse P."/>
        </authorList>
    </citation>
    <scope>NUCLEOTIDE SEQUENCE [LARGE SCALE GENOMIC DNA]</scope>
    <source>
        <strain>972 / ATCC 24843</strain>
    </source>
</reference>
<reference key="2">
    <citation type="journal article" date="2001" name="Nucleic Acids Res.">
        <title>Comprehensive isolation of meiosis-specific genes identifies novel proteins and unusual non-coding transcripts in Schizosaccharomyces pombe.</title>
        <authorList>
            <person name="Watanabe T."/>
            <person name="Miyashita K."/>
            <person name="Saito T.T."/>
            <person name="Yoneki T."/>
            <person name="Kakihara Y."/>
            <person name="Nabeshima K."/>
            <person name="Kishi Y.A."/>
            <person name="Shimoda C."/>
            <person name="Nojima H."/>
        </authorList>
    </citation>
    <scope>NUCLEOTIDE SEQUENCE [MRNA] OF 210-450</scope>
    <source>
        <strain>CD16-1</strain>
    </source>
</reference>
<comment type="catalytic activity">
    <reaction>
        <text>Hydrolysis of terminal (1-&gt;4)-linked alpha-D-glucose residues successively from non-reducing ends of the chains with release of beta-D-glucose.</text>
        <dbReference type="EC" id="3.2.1.3"/>
    </reaction>
</comment>
<comment type="similarity">
    <text evidence="3">Belongs to the glycosyl hydrolase 15 family.</text>
</comment>
<proteinExistence type="evidence at transcript level"/>
<evidence type="ECO:0000250" key="1"/>
<evidence type="ECO:0000255" key="2"/>
<evidence type="ECO:0000305" key="3"/>
<name>AMYG_SCHPO</name>
<sequence length="450" mass="51164">MRTYWLFLLLGGVVSAESLLSPNKRSKEASMDEWTDQQKGIAMGHMLNNIGDSGMHAKDINPGCIIASPSTDSPDYYYQWVRDSALTIMTILDRFFEGDKGLEPIIVKYMDEMVRLQKVPNPSGDFYAGGLGEPKFNVDGTSYDGDWGRPQNDSPALRAIAFIKYMNYLFENGKEVHEVTVWIEAVLADLDYTANHWTEASFDLWEEIKDVHYFTLAVQKRAMQDGTAFAKRIGAPDQAALYQRTIEPIDLKLGEFWDPGMGVIKGYKGRVDRSGLDCSTLLASLYSNEFDMHILPTLLKLQETMTRDYPVNQGWKQAMGRYPEDVYDGVSKSIGNPWFICTSSAAEIIYKAIAYYDNKGLPELTEYNIHFFMKFAEFGDPYNWSVIRKNMHTYADNFLKAVAEFQHPNGSMSEQFSRDDGHQKGARDLTWSYSSLLNAIYRREAIKGSV</sequence>
<feature type="signal peptide" evidence="2">
    <location>
        <begin position="1"/>
        <end position="16"/>
    </location>
</feature>
<feature type="propeptide" id="PRO_0000001479" evidence="1">
    <location>
        <begin position="17"/>
        <end position="28"/>
    </location>
</feature>
<feature type="chain" id="PRO_0000001480" description="Probable glucoamylase">
    <location>
        <begin position="29"/>
        <end position="450"/>
    </location>
</feature>
<feature type="active site" description="Proton acceptor" evidence="1">
    <location>
        <position position="203"/>
    </location>
</feature>
<feature type="active site" description="Proton donor" evidence="1">
    <location>
        <position position="206"/>
    </location>
</feature>
<feature type="binding site" evidence="1">
    <location>
        <position position="147"/>
    </location>
    <ligand>
        <name>substrate</name>
    </ligand>
</feature>
<feature type="glycosylation site" description="N-linked (GlcNAc...) asparagine" evidence="2">
    <location>
        <position position="383"/>
    </location>
</feature>
<feature type="glycosylation site" description="N-linked (GlcNAc...) asparagine" evidence="2">
    <location>
        <position position="409"/>
    </location>
</feature>
<dbReference type="EC" id="3.2.1.3"/>
<dbReference type="EMBL" id="CU329671">
    <property type="protein sequence ID" value="CAA18423.1"/>
    <property type="molecule type" value="Genomic_DNA"/>
</dbReference>
<dbReference type="EMBL" id="AB054301">
    <property type="protein sequence ID" value="BAB60870.1"/>
    <property type="molecule type" value="mRNA"/>
</dbReference>
<dbReference type="PIR" id="T39433">
    <property type="entry name" value="T39433"/>
</dbReference>
<dbReference type="RefSeq" id="NP_595908.1">
    <property type="nucleotide sequence ID" value="NM_001021816.2"/>
</dbReference>
<dbReference type="SMR" id="O60087"/>
<dbReference type="BioGRID" id="276237">
    <property type="interactions" value="1"/>
</dbReference>
<dbReference type="FunCoup" id="O60087">
    <property type="interactions" value="66"/>
</dbReference>
<dbReference type="STRING" id="284812.O60087"/>
<dbReference type="CAZy" id="GH15">
    <property type="family name" value="Glycoside Hydrolase Family 15"/>
</dbReference>
<dbReference type="GlyCosmos" id="O60087">
    <property type="glycosylation" value="2 sites, No reported glycans"/>
</dbReference>
<dbReference type="PaxDb" id="4896-SPBC14C8.05c.1"/>
<dbReference type="EnsemblFungi" id="SPBC14C8.05c.1">
    <property type="protein sequence ID" value="SPBC14C8.05c.1:pep"/>
    <property type="gene ID" value="SPBC14C8.05c"/>
</dbReference>
<dbReference type="GeneID" id="2539682"/>
<dbReference type="KEGG" id="spo:2539682"/>
<dbReference type="PomBase" id="SPBC14C8.05c">
    <property type="gene designation" value="meu17"/>
</dbReference>
<dbReference type="VEuPathDB" id="FungiDB:SPBC14C8.05c"/>
<dbReference type="eggNOG" id="ENOG502QPM2">
    <property type="taxonomic scope" value="Eukaryota"/>
</dbReference>
<dbReference type="HOGENOM" id="CLU_012173_2_2_1"/>
<dbReference type="InParanoid" id="O60087"/>
<dbReference type="OMA" id="SHFWNQS"/>
<dbReference type="PhylomeDB" id="O60087"/>
<dbReference type="PRO" id="PR:O60087"/>
<dbReference type="Proteomes" id="UP000002485">
    <property type="component" value="Chromosome II"/>
</dbReference>
<dbReference type="GO" id="GO:0009986">
    <property type="term" value="C:cell surface"/>
    <property type="evidence" value="ECO:0000303"/>
    <property type="project" value="PomBase"/>
</dbReference>
<dbReference type="GO" id="GO:0005783">
    <property type="term" value="C:endoplasmic reticulum"/>
    <property type="evidence" value="ECO:0007005"/>
    <property type="project" value="PomBase"/>
</dbReference>
<dbReference type="GO" id="GO:0000324">
    <property type="term" value="C:fungal-type vacuole"/>
    <property type="evidence" value="ECO:0000318"/>
    <property type="project" value="GO_Central"/>
</dbReference>
<dbReference type="GO" id="GO:0005794">
    <property type="term" value="C:Golgi apparatus"/>
    <property type="evidence" value="ECO:0007005"/>
    <property type="project" value="PomBase"/>
</dbReference>
<dbReference type="GO" id="GO:0005628">
    <property type="term" value="C:prospore membrane"/>
    <property type="evidence" value="ECO:0007005"/>
    <property type="project" value="PomBase"/>
</dbReference>
<dbReference type="GO" id="GO:0004339">
    <property type="term" value="F:glucan 1,4-alpha-glucosidase activity"/>
    <property type="evidence" value="ECO:0000266"/>
    <property type="project" value="PomBase"/>
</dbReference>
<dbReference type="GO" id="GO:0004553">
    <property type="term" value="F:hydrolase activity, hydrolyzing O-glycosyl compounds"/>
    <property type="evidence" value="ECO:0000318"/>
    <property type="project" value="GO_Central"/>
</dbReference>
<dbReference type="GO" id="GO:0005980">
    <property type="term" value="P:glycogen catabolic process"/>
    <property type="evidence" value="ECO:0000266"/>
    <property type="project" value="PomBase"/>
</dbReference>
<dbReference type="GO" id="GO:0051321">
    <property type="term" value="P:meiotic cell cycle"/>
    <property type="evidence" value="ECO:0007669"/>
    <property type="project" value="UniProtKB-KW"/>
</dbReference>
<dbReference type="FunFam" id="1.50.10.10:FF:000018">
    <property type="entry name" value="Glucoamylase"/>
    <property type="match status" value="1"/>
</dbReference>
<dbReference type="Gene3D" id="1.50.10.10">
    <property type="match status" value="1"/>
</dbReference>
<dbReference type="InterPro" id="IPR008928">
    <property type="entry name" value="6-hairpin_glycosidase_sf"/>
</dbReference>
<dbReference type="InterPro" id="IPR012341">
    <property type="entry name" value="6hp_glycosidase-like_sf"/>
</dbReference>
<dbReference type="InterPro" id="IPR011613">
    <property type="entry name" value="GH15-like"/>
</dbReference>
<dbReference type="InterPro" id="IPR000165">
    <property type="entry name" value="Glucoamylase"/>
</dbReference>
<dbReference type="PANTHER" id="PTHR31616:SF9">
    <property type="entry name" value="GLUCOAMYLASE, INTRACELLULAR SPORULATION-SPECIFIC"/>
    <property type="match status" value="1"/>
</dbReference>
<dbReference type="PANTHER" id="PTHR31616">
    <property type="entry name" value="TREHALASE"/>
    <property type="match status" value="1"/>
</dbReference>
<dbReference type="Pfam" id="PF00723">
    <property type="entry name" value="Glyco_hydro_15"/>
    <property type="match status" value="1"/>
</dbReference>
<dbReference type="PRINTS" id="PR00736">
    <property type="entry name" value="GLHYDRLASE15"/>
</dbReference>
<dbReference type="SUPFAM" id="SSF48208">
    <property type="entry name" value="Six-hairpin glycosidases"/>
    <property type="match status" value="1"/>
</dbReference>
<keyword id="KW-0119">Carbohydrate metabolism</keyword>
<keyword id="KW-0325">Glycoprotein</keyword>
<keyword id="KW-0326">Glycosidase</keyword>
<keyword id="KW-0378">Hydrolase</keyword>
<keyword id="KW-0469">Meiosis</keyword>
<keyword id="KW-0624">Polysaccharide degradation</keyword>
<keyword id="KW-1185">Reference proteome</keyword>
<keyword id="KW-0732">Signal</keyword>
<organism>
    <name type="scientific">Schizosaccharomyces pombe (strain 972 / ATCC 24843)</name>
    <name type="common">Fission yeast</name>
    <dbReference type="NCBI Taxonomy" id="284812"/>
    <lineage>
        <taxon>Eukaryota</taxon>
        <taxon>Fungi</taxon>
        <taxon>Dikarya</taxon>
        <taxon>Ascomycota</taxon>
        <taxon>Taphrinomycotina</taxon>
        <taxon>Schizosaccharomycetes</taxon>
        <taxon>Schizosaccharomycetales</taxon>
        <taxon>Schizosaccharomycetaceae</taxon>
        <taxon>Schizosaccharomyces</taxon>
    </lineage>
</organism>
<gene>
    <name type="primary">meu17</name>
    <name type="ORF">SPBC14C8.05c</name>
</gene>